<gene>
    <name evidence="1" type="primary">rplP</name>
    <name type="ordered locus">CJA_0706</name>
</gene>
<accession>B3PK44</accession>
<protein>
    <recommendedName>
        <fullName evidence="1">Large ribosomal subunit protein uL16</fullName>
    </recommendedName>
    <alternativeName>
        <fullName evidence="2">50S ribosomal protein L16</fullName>
    </alternativeName>
</protein>
<organism>
    <name type="scientific">Cellvibrio japonicus (strain Ueda107)</name>
    <name type="common">Pseudomonas fluorescens subsp. cellulosa</name>
    <dbReference type="NCBI Taxonomy" id="498211"/>
    <lineage>
        <taxon>Bacteria</taxon>
        <taxon>Pseudomonadati</taxon>
        <taxon>Pseudomonadota</taxon>
        <taxon>Gammaproteobacteria</taxon>
        <taxon>Cellvibrionales</taxon>
        <taxon>Cellvibrionaceae</taxon>
        <taxon>Cellvibrio</taxon>
    </lineage>
</organism>
<comment type="function">
    <text evidence="1">Binds 23S rRNA and is also seen to make contacts with the A and possibly P site tRNAs.</text>
</comment>
<comment type="subunit">
    <text evidence="1">Part of the 50S ribosomal subunit.</text>
</comment>
<comment type="similarity">
    <text evidence="1">Belongs to the universal ribosomal protein uL16 family.</text>
</comment>
<evidence type="ECO:0000255" key="1">
    <source>
        <dbReference type="HAMAP-Rule" id="MF_01342"/>
    </source>
</evidence>
<evidence type="ECO:0000305" key="2"/>
<reference key="1">
    <citation type="journal article" date="2008" name="J. Bacteriol.">
        <title>Insights into plant cell wall degradation from the genome sequence of the soil bacterium Cellvibrio japonicus.</title>
        <authorList>
            <person name="DeBoy R.T."/>
            <person name="Mongodin E.F."/>
            <person name="Fouts D.E."/>
            <person name="Tailford L.E."/>
            <person name="Khouri H."/>
            <person name="Emerson J.B."/>
            <person name="Mohamoud Y."/>
            <person name="Watkins K."/>
            <person name="Henrissat B."/>
            <person name="Gilbert H.J."/>
            <person name="Nelson K.E."/>
        </authorList>
    </citation>
    <scope>NUCLEOTIDE SEQUENCE [LARGE SCALE GENOMIC DNA]</scope>
    <source>
        <strain>Ueda107</strain>
    </source>
</reference>
<sequence length="137" mass="15315">MLQPKRTKFRKQMKGRNRGLALRGSKVSFGDFGLKATGRGRITARQIEAARRAMTRHVKRGGKIWIRVFPDKPITAKPLEVRMGSGKGGVEYWVAQIRPGKVLYEMDGVSEELAREAFALAAAKLPVTTTFVKRSVM</sequence>
<feature type="chain" id="PRO_1000142941" description="Large ribosomal subunit protein uL16">
    <location>
        <begin position="1"/>
        <end position="137"/>
    </location>
</feature>
<name>RL16_CELJU</name>
<keyword id="KW-1185">Reference proteome</keyword>
<keyword id="KW-0687">Ribonucleoprotein</keyword>
<keyword id="KW-0689">Ribosomal protein</keyword>
<keyword id="KW-0694">RNA-binding</keyword>
<keyword id="KW-0699">rRNA-binding</keyword>
<keyword id="KW-0820">tRNA-binding</keyword>
<proteinExistence type="inferred from homology"/>
<dbReference type="EMBL" id="CP000934">
    <property type="protein sequence ID" value="ACE84334.1"/>
    <property type="molecule type" value="Genomic_DNA"/>
</dbReference>
<dbReference type="RefSeq" id="WP_012486369.1">
    <property type="nucleotide sequence ID" value="NC_010995.1"/>
</dbReference>
<dbReference type="SMR" id="B3PK44"/>
<dbReference type="STRING" id="498211.CJA_0706"/>
<dbReference type="KEGG" id="cja:CJA_0706"/>
<dbReference type="eggNOG" id="COG0197">
    <property type="taxonomic scope" value="Bacteria"/>
</dbReference>
<dbReference type="HOGENOM" id="CLU_078858_2_1_6"/>
<dbReference type="OrthoDB" id="9802589at2"/>
<dbReference type="Proteomes" id="UP000001036">
    <property type="component" value="Chromosome"/>
</dbReference>
<dbReference type="GO" id="GO:0022625">
    <property type="term" value="C:cytosolic large ribosomal subunit"/>
    <property type="evidence" value="ECO:0007669"/>
    <property type="project" value="TreeGrafter"/>
</dbReference>
<dbReference type="GO" id="GO:0019843">
    <property type="term" value="F:rRNA binding"/>
    <property type="evidence" value="ECO:0007669"/>
    <property type="project" value="UniProtKB-UniRule"/>
</dbReference>
<dbReference type="GO" id="GO:0003735">
    <property type="term" value="F:structural constituent of ribosome"/>
    <property type="evidence" value="ECO:0007669"/>
    <property type="project" value="InterPro"/>
</dbReference>
<dbReference type="GO" id="GO:0000049">
    <property type="term" value="F:tRNA binding"/>
    <property type="evidence" value="ECO:0007669"/>
    <property type="project" value="UniProtKB-KW"/>
</dbReference>
<dbReference type="GO" id="GO:0006412">
    <property type="term" value="P:translation"/>
    <property type="evidence" value="ECO:0007669"/>
    <property type="project" value="UniProtKB-UniRule"/>
</dbReference>
<dbReference type="CDD" id="cd01433">
    <property type="entry name" value="Ribosomal_L16_L10e"/>
    <property type="match status" value="1"/>
</dbReference>
<dbReference type="FunFam" id="3.90.1170.10:FF:000001">
    <property type="entry name" value="50S ribosomal protein L16"/>
    <property type="match status" value="1"/>
</dbReference>
<dbReference type="Gene3D" id="3.90.1170.10">
    <property type="entry name" value="Ribosomal protein L10e/L16"/>
    <property type="match status" value="1"/>
</dbReference>
<dbReference type="HAMAP" id="MF_01342">
    <property type="entry name" value="Ribosomal_uL16"/>
    <property type="match status" value="1"/>
</dbReference>
<dbReference type="InterPro" id="IPR047873">
    <property type="entry name" value="Ribosomal_uL16"/>
</dbReference>
<dbReference type="InterPro" id="IPR000114">
    <property type="entry name" value="Ribosomal_uL16_bact-type"/>
</dbReference>
<dbReference type="InterPro" id="IPR020798">
    <property type="entry name" value="Ribosomal_uL16_CS"/>
</dbReference>
<dbReference type="InterPro" id="IPR016180">
    <property type="entry name" value="Ribosomal_uL16_dom"/>
</dbReference>
<dbReference type="InterPro" id="IPR036920">
    <property type="entry name" value="Ribosomal_uL16_sf"/>
</dbReference>
<dbReference type="NCBIfam" id="TIGR01164">
    <property type="entry name" value="rplP_bact"/>
    <property type="match status" value="1"/>
</dbReference>
<dbReference type="PANTHER" id="PTHR12220">
    <property type="entry name" value="50S/60S RIBOSOMAL PROTEIN L16"/>
    <property type="match status" value="1"/>
</dbReference>
<dbReference type="PANTHER" id="PTHR12220:SF13">
    <property type="entry name" value="LARGE RIBOSOMAL SUBUNIT PROTEIN UL16M"/>
    <property type="match status" value="1"/>
</dbReference>
<dbReference type="Pfam" id="PF00252">
    <property type="entry name" value="Ribosomal_L16"/>
    <property type="match status" value="1"/>
</dbReference>
<dbReference type="PRINTS" id="PR00060">
    <property type="entry name" value="RIBOSOMALL16"/>
</dbReference>
<dbReference type="SUPFAM" id="SSF54686">
    <property type="entry name" value="Ribosomal protein L16p/L10e"/>
    <property type="match status" value="1"/>
</dbReference>
<dbReference type="PROSITE" id="PS00586">
    <property type="entry name" value="RIBOSOMAL_L16_1"/>
    <property type="match status" value="1"/>
</dbReference>
<dbReference type="PROSITE" id="PS00701">
    <property type="entry name" value="RIBOSOMAL_L16_2"/>
    <property type="match status" value="1"/>
</dbReference>